<sequence>MITSFESIEKKNAVYYPVDLKFVTDLSSDLSNTADGLGQAWYKISQVAVEHIILTALKINYVLNHRTLLLIYNKKVPDMDLINIIQSSIMVPRFVRDLIREILRPMHHSGITYIPDLDLSTRPTPHLLDTFYPIAEHLTRWNNVCQKLGFEMVPILPEAVQSVSLTFYSYETDELLSFDNLINLDWRIEAFGWTKHLVHNPTSEVDELGKSQTATSRKRVQEKDYECDDFRKVYERPLQNRRILGMIVYRYTCAPYTMRLGHLSPNCRFPTEKNHSETPPTSNRVLLSEQTMVHSIQKNRSKPKKVKIVTTECSADRSH</sequence>
<protein>
    <recommendedName>
        <fullName>Capsid protein</fullName>
        <shortName>CP</shortName>
    </recommendedName>
    <alternativeName>
        <fullName>Coat protein</fullName>
    </alternativeName>
</protein>
<evidence type="ECO:0000250" key="1"/>
<evidence type="ECO:0000305" key="2"/>
<name>CAPSD_CPVKS</name>
<comment type="function">
    <text evidence="1">The capsid protein self-assembles to form an icosahedral capsid with a T=2 symmetry made of 120 subunits.</text>
</comment>
<comment type="subcellular location">
    <subcellularLocation>
        <location evidence="2">Virion</location>
    </subcellularLocation>
</comment>
<keyword id="KW-0167">Capsid protein</keyword>
<keyword id="KW-1185">Reference proteome</keyword>
<keyword id="KW-1140">T=1 icosahedral capsid protein</keyword>
<keyword id="KW-0946">Virion</keyword>
<dbReference type="EMBL" id="U95996">
    <property type="protein sequence ID" value="AAC47806.1"/>
    <property type="molecule type" value="Genomic_RNA"/>
</dbReference>
<dbReference type="Proteomes" id="UP000006921">
    <property type="component" value="Genome"/>
</dbReference>
<dbReference type="GO" id="GO:0039615">
    <property type="term" value="C:T=1 icosahedral viral capsid"/>
    <property type="evidence" value="ECO:0007669"/>
    <property type="project" value="UniProtKB-KW"/>
</dbReference>
<organism>
    <name type="scientific">Cryptosporidium parvum virus 1 (strain KSU-1)</name>
    <dbReference type="NCBI Taxonomy" id="766191"/>
    <lineage>
        <taxon>Viruses</taxon>
        <taxon>Riboviria</taxon>
        <taxon>Orthornavirae</taxon>
        <taxon>Pisuviricota</taxon>
        <taxon>Duplopiviricetes</taxon>
        <taxon>Durnavirales</taxon>
        <taxon>Partitiviridae</taxon>
        <taxon>Cryspovirus</taxon>
        <taxon>Cryptosporidium parvum virus 1</taxon>
    </lineage>
</organism>
<proteinExistence type="inferred from homology"/>
<organismHost>
    <name type="scientific">Cryptosporidium parvum</name>
    <dbReference type="NCBI Taxonomy" id="5807"/>
</organismHost>
<reference key="1">
    <citation type="journal article" date="1997" name="Mol. Microbiol.">
        <title>Virus-like, double-stranded RNAs in the parasitic protozoan Cryptosporidium parvum.</title>
        <authorList>
            <person name="Khramtsov N.V."/>
            <person name="Woods K.M."/>
            <person name="Nesterenko M.V."/>
            <person name="Dykstra C.C."/>
            <person name="Upton S.J."/>
        </authorList>
    </citation>
    <scope>NUCLEOTIDE SEQUENCE [GENOMIC RNA]</scope>
</reference>
<feature type="chain" id="PRO_0000402795" description="Capsid protein">
    <location>
        <begin position="1"/>
        <end position="319"/>
    </location>
</feature>
<accession>O15926</accession>